<organism>
    <name type="scientific">Yersinia pestis bv. Antiqua (strain Angola)</name>
    <dbReference type="NCBI Taxonomy" id="349746"/>
    <lineage>
        <taxon>Bacteria</taxon>
        <taxon>Pseudomonadati</taxon>
        <taxon>Pseudomonadota</taxon>
        <taxon>Gammaproteobacteria</taxon>
        <taxon>Enterobacterales</taxon>
        <taxon>Yersiniaceae</taxon>
        <taxon>Yersinia</taxon>
    </lineage>
</organism>
<dbReference type="EMBL" id="CP000901">
    <property type="protein sequence ID" value="ABX85664.1"/>
    <property type="molecule type" value="Genomic_DNA"/>
</dbReference>
<dbReference type="RefSeq" id="WP_002210674.1">
    <property type="nucleotide sequence ID" value="NZ_CP009935.1"/>
</dbReference>
<dbReference type="GeneID" id="96663774"/>
<dbReference type="KEGG" id="ypg:YpAngola_A2808"/>
<dbReference type="PATRIC" id="fig|349746.12.peg.3841"/>
<dbReference type="GO" id="GO:0015934">
    <property type="term" value="C:large ribosomal subunit"/>
    <property type="evidence" value="ECO:0007669"/>
    <property type="project" value="InterPro"/>
</dbReference>
<dbReference type="GO" id="GO:0070180">
    <property type="term" value="F:large ribosomal subunit rRNA binding"/>
    <property type="evidence" value="ECO:0007669"/>
    <property type="project" value="UniProtKB-UniRule"/>
</dbReference>
<dbReference type="GO" id="GO:0003735">
    <property type="term" value="F:structural constituent of ribosome"/>
    <property type="evidence" value="ECO:0007669"/>
    <property type="project" value="InterPro"/>
</dbReference>
<dbReference type="GO" id="GO:0006412">
    <property type="term" value="P:translation"/>
    <property type="evidence" value="ECO:0007669"/>
    <property type="project" value="UniProtKB-UniRule"/>
</dbReference>
<dbReference type="CDD" id="cd05797">
    <property type="entry name" value="Ribosomal_L10"/>
    <property type="match status" value="1"/>
</dbReference>
<dbReference type="FunFam" id="3.30.70.1730:FF:000001">
    <property type="entry name" value="50S ribosomal protein L10"/>
    <property type="match status" value="1"/>
</dbReference>
<dbReference type="Gene3D" id="3.30.70.1730">
    <property type="match status" value="1"/>
</dbReference>
<dbReference type="Gene3D" id="6.10.250.2350">
    <property type="match status" value="1"/>
</dbReference>
<dbReference type="HAMAP" id="MF_00362">
    <property type="entry name" value="Ribosomal_uL10"/>
    <property type="match status" value="1"/>
</dbReference>
<dbReference type="InterPro" id="IPR001790">
    <property type="entry name" value="Ribosomal_uL10"/>
</dbReference>
<dbReference type="InterPro" id="IPR043141">
    <property type="entry name" value="Ribosomal_uL10-like_sf"/>
</dbReference>
<dbReference type="InterPro" id="IPR022973">
    <property type="entry name" value="Ribosomal_uL10_bac"/>
</dbReference>
<dbReference type="InterPro" id="IPR047865">
    <property type="entry name" value="Ribosomal_uL10_bac_type"/>
</dbReference>
<dbReference type="InterPro" id="IPR002363">
    <property type="entry name" value="Ribosomal_uL10_CS_bac"/>
</dbReference>
<dbReference type="NCBIfam" id="NF000955">
    <property type="entry name" value="PRK00099.1-1"/>
    <property type="match status" value="1"/>
</dbReference>
<dbReference type="PANTHER" id="PTHR11560">
    <property type="entry name" value="39S RIBOSOMAL PROTEIN L10, MITOCHONDRIAL"/>
    <property type="match status" value="1"/>
</dbReference>
<dbReference type="Pfam" id="PF00466">
    <property type="entry name" value="Ribosomal_L10"/>
    <property type="match status" value="1"/>
</dbReference>
<dbReference type="SUPFAM" id="SSF160369">
    <property type="entry name" value="Ribosomal protein L10-like"/>
    <property type="match status" value="1"/>
</dbReference>
<dbReference type="PROSITE" id="PS01109">
    <property type="entry name" value="RIBOSOMAL_L10"/>
    <property type="match status" value="1"/>
</dbReference>
<feature type="chain" id="PRO_1000121038" description="Large ribosomal subunit protein uL10">
    <location>
        <begin position="1"/>
        <end position="165"/>
    </location>
</feature>
<protein>
    <recommendedName>
        <fullName evidence="1">Large ribosomal subunit protein uL10</fullName>
    </recommendedName>
    <alternativeName>
        <fullName evidence="2">50S ribosomal protein L10</fullName>
    </alternativeName>
</protein>
<name>RL10_YERPG</name>
<accession>A9R0H6</accession>
<proteinExistence type="inferred from homology"/>
<evidence type="ECO:0000255" key="1">
    <source>
        <dbReference type="HAMAP-Rule" id="MF_00362"/>
    </source>
</evidence>
<evidence type="ECO:0000305" key="2"/>
<comment type="function">
    <text evidence="1">Forms part of the ribosomal stalk, playing a central role in the interaction of the ribosome with GTP-bound translation factors.</text>
</comment>
<comment type="subunit">
    <text evidence="1">Part of the ribosomal stalk of the 50S ribosomal subunit. The N-terminus interacts with L11 and the large rRNA to form the base of the stalk. The C-terminus forms an elongated spine to which L12 dimers bind in a sequential fashion forming a multimeric L10(L12)X complex.</text>
</comment>
<comment type="similarity">
    <text evidence="1">Belongs to the universal ribosomal protein uL10 family.</text>
</comment>
<sequence length="165" mass="17676">MALNLQGKQAIVAEVKEVAKGALSAVVADSRGVTVDKMTELRRAGREAGVHMQVVRNTLLRRIVEGTPFECLKDTFVGPTLIAFSAEHPGAAARLFKAFAKDNAKFEVKAAAFEGELIPAAQIDRLATLPTYEEAIARLMGTMKEAAAGKLVRTLAALRDQKEAA</sequence>
<gene>
    <name evidence="1" type="primary">rplJ</name>
    <name type="ordered locus">YpAngola_A2808</name>
</gene>
<keyword id="KW-0687">Ribonucleoprotein</keyword>
<keyword id="KW-0689">Ribosomal protein</keyword>
<keyword id="KW-0694">RNA-binding</keyword>
<keyword id="KW-0699">rRNA-binding</keyword>
<reference key="1">
    <citation type="journal article" date="2010" name="J. Bacteriol.">
        <title>Genome sequence of the deep-rooted Yersinia pestis strain Angola reveals new insights into the evolution and pangenome of the plague bacterium.</title>
        <authorList>
            <person name="Eppinger M."/>
            <person name="Worsham P.L."/>
            <person name="Nikolich M.P."/>
            <person name="Riley D.R."/>
            <person name="Sebastian Y."/>
            <person name="Mou S."/>
            <person name="Achtman M."/>
            <person name="Lindler L.E."/>
            <person name="Ravel J."/>
        </authorList>
    </citation>
    <scope>NUCLEOTIDE SEQUENCE [LARGE SCALE GENOMIC DNA]</scope>
    <source>
        <strain>Angola</strain>
    </source>
</reference>